<reference key="1">
    <citation type="journal article" date="2006" name="J. Bacteriol.">
        <title>Genome sequence of Aeromonas hydrophila ATCC 7966T: jack of all trades.</title>
        <authorList>
            <person name="Seshadri R."/>
            <person name="Joseph S.W."/>
            <person name="Chopra A.K."/>
            <person name="Sha J."/>
            <person name="Shaw J."/>
            <person name="Graf J."/>
            <person name="Haft D.H."/>
            <person name="Wu M."/>
            <person name="Ren Q."/>
            <person name="Rosovitz M.J."/>
            <person name="Madupu R."/>
            <person name="Tallon L."/>
            <person name="Kim M."/>
            <person name="Jin S."/>
            <person name="Vuong H."/>
            <person name="Stine O.C."/>
            <person name="Ali A."/>
            <person name="Horneman A.J."/>
            <person name="Heidelberg J.F."/>
        </authorList>
    </citation>
    <scope>NUCLEOTIDE SEQUENCE [LARGE SCALE GENOMIC DNA]</scope>
    <source>
        <strain>ATCC 7966 / DSM 30187 / BCRC 13018 / CCUG 14551 / JCM 1027 / KCTC 2358 / NCIMB 9240 / NCTC 8049</strain>
    </source>
</reference>
<evidence type="ECO:0000255" key="1">
    <source>
        <dbReference type="HAMAP-Rule" id="MF_00815"/>
    </source>
</evidence>
<proteinExistence type="inferred from homology"/>
<comment type="function">
    <text evidence="1">Produces ATP from ADP in the presence of a proton gradient across the membrane. The gamma chain is believed to be important in regulating ATPase activity and the flow of protons through the CF(0) complex.</text>
</comment>
<comment type="subunit">
    <text evidence="1">F-type ATPases have 2 components, CF(1) - the catalytic core - and CF(0) - the membrane proton channel. CF(1) has five subunits: alpha(3), beta(3), gamma(1), delta(1), epsilon(1). CF(0) has three main subunits: a, b and c.</text>
</comment>
<comment type="subcellular location">
    <subcellularLocation>
        <location evidence="1">Cell inner membrane</location>
        <topology evidence="1">Peripheral membrane protein</topology>
    </subcellularLocation>
</comment>
<comment type="similarity">
    <text evidence="1">Belongs to the ATPase gamma chain family.</text>
</comment>
<sequence>MAGAKEIRNKIGSVKNTQKITGAMEMVAASKMRRAQDRMSASRPYAETMRKVIGHIAQGNLEYKHPYLIEREVKRVGYIVVSTDRGLCGGLNINLFKAALNDMKQWSAKGAKVDLALIGNKASNFFERHGAKVKAHVAGLGDNPSVNDLIGSVKVMLKAYDNGEIDRLYLVYNKFVNTMVQQPRVDQLLPLPVTEDSKLAKKHHWDYLYEPDPKQLLDTLLIRYVESQVYQGVVENLASEQAARMVAMQAATDNAGNLINDLQLVYNKARQASITQELTEIVSGAAAV</sequence>
<feature type="chain" id="PRO_1000053147" description="ATP synthase gamma chain">
    <location>
        <begin position="1"/>
        <end position="288"/>
    </location>
</feature>
<organism>
    <name type="scientific">Aeromonas hydrophila subsp. hydrophila (strain ATCC 7966 / DSM 30187 / BCRC 13018 / CCUG 14551 / JCM 1027 / KCTC 2358 / NCIMB 9240 / NCTC 8049)</name>
    <dbReference type="NCBI Taxonomy" id="380703"/>
    <lineage>
        <taxon>Bacteria</taxon>
        <taxon>Pseudomonadati</taxon>
        <taxon>Pseudomonadota</taxon>
        <taxon>Gammaproteobacteria</taxon>
        <taxon>Aeromonadales</taxon>
        <taxon>Aeromonadaceae</taxon>
        <taxon>Aeromonas</taxon>
    </lineage>
</organism>
<keyword id="KW-0066">ATP synthesis</keyword>
<keyword id="KW-0997">Cell inner membrane</keyword>
<keyword id="KW-1003">Cell membrane</keyword>
<keyword id="KW-0139">CF(1)</keyword>
<keyword id="KW-0375">Hydrogen ion transport</keyword>
<keyword id="KW-0406">Ion transport</keyword>
<keyword id="KW-0472">Membrane</keyword>
<keyword id="KW-1185">Reference proteome</keyword>
<keyword id="KW-0813">Transport</keyword>
<gene>
    <name evidence="1" type="primary">atpG</name>
    <name type="ordered locus">AHA_4263</name>
</gene>
<dbReference type="EMBL" id="CP000462">
    <property type="protein sequence ID" value="ABK38678.1"/>
    <property type="molecule type" value="Genomic_DNA"/>
</dbReference>
<dbReference type="RefSeq" id="WP_011707909.1">
    <property type="nucleotide sequence ID" value="NC_008570.1"/>
</dbReference>
<dbReference type="RefSeq" id="YP_858680.1">
    <property type="nucleotide sequence ID" value="NC_008570.1"/>
</dbReference>
<dbReference type="SMR" id="A0KQX9"/>
<dbReference type="STRING" id="380703.AHA_4263"/>
<dbReference type="EnsemblBacteria" id="ABK38678">
    <property type="protein sequence ID" value="ABK38678"/>
    <property type="gene ID" value="AHA_4263"/>
</dbReference>
<dbReference type="GeneID" id="4487367"/>
<dbReference type="KEGG" id="aha:AHA_4263"/>
<dbReference type="PATRIC" id="fig|380703.7.peg.4213"/>
<dbReference type="eggNOG" id="COG0224">
    <property type="taxonomic scope" value="Bacteria"/>
</dbReference>
<dbReference type="HOGENOM" id="CLU_050669_0_1_6"/>
<dbReference type="OrthoDB" id="9812769at2"/>
<dbReference type="Proteomes" id="UP000000756">
    <property type="component" value="Chromosome"/>
</dbReference>
<dbReference type="GO" id="GO:0005886">
    <property type="term" value="C:plasma membrane"/>
    <property type="evidence" value="ECO:0007669"/>
    <property type="project" value="UniProtKB-SubCell"/>
</dbReference>
<dbReference type="GO" id="GO:0045259">
    <property type="term" value="C:proton-transporting ATP synthase complex"/>
    <property type="evidence" value="ECO:0007669"/>
    <property type="project" value="UniProtKB-KW"/>
</dbReference>
<dbReference type="GO" id="GO:0005524">
    <property type="term" value="F:ATP binding"/>
    <property type="evidence" value="ECO:0007669"/>
    <property type="project" value="UniProtKB-UniRule"/>
</dbReference>
<dbReference type="GO" id="GO:0046933">
    <property type="term" value="F:proton-transporting ATP synthase activity, rotational mechanism"/>
    <property type="evidence" value="ECO:0007669"/>
    <property type="project" value="UniProtKB-UniRule"/>
</dbReference>
<dbReference type="GO" id="GO:0042777">
    <property type="term" value="P:proton motive force-driven plasma membrane ATP synthesis"/>
    <property type="evidence" value="ECO:0007669"/>
    <property type="project" value="UniProtKB-UniRule"/>
</dbReference>
<dbReference type="CDD" id="cd12151">
    <property type="entry name" value="F1-ATPase_gamma"/>
    <property type="match status" value="1"/>
</dbReference>
<dbReference type="FunFam" id="1.10.287.80:FF:000005">
    <property type="entry name" value="ATP synthase gamma chain"/>
    <property type="match status" value="2"/>
</dbReference>
<dbReference type="FunFam" id="3.40.1380.10:FF:000001">
    <property type="entry name" value="ATP synthase gamma chain"/>
    <property type="match status" value="1"/>
</dbReference>
<dbReference type="Gene3D" id="3.40.1380.10">
    <property type="match status" value="1"/>
</dbReference>
<dbReference type="Gene3D" id="1.10.287.80">
    <property type="entry name" value="ATP synthase, gamma subunit, helix hairpin domain"/>
    <property type="match status" value="2"/>
</dbReference>
<dbReference type="HAMAP" id="MF_00815">
    <property type="entry name" value="ATP_synth_gamma_bact"/>
    <property type="match status" value="1"/>
</dbReference>
<dbReference type="InterPro" id="IPR035968">
    <property type="entry name" value="ATP_synth_F1_ATPase_gsu"/>
</dbReference>
<dbReference type="InterPro" id="IPR000131">
    <property type="entry name" value="ATP_synth_F1_gsu"/>
</dbReference>
<dbReference type="InterPro" id="IPR023632">
    <property type="entry name" value="ATP_synth_F1_gsu_CS"/>
</dbReference>
<dbReference type="NCBIfam" id="TIGR01146">
    <property type="entry name" value="ATPsyn_F1gamma"/>
    <property type="match status" value="1"/>
</dbReference>
<dbReference type="NCBIfam" id="NF004144">
    <property type="entry name" value="PRK05621.1-1"/>
    <property type="match status" value="1"/>
</dbReference>
<dbReference type="PANTHER" id="PTHR11693">
    <property type="entry name" value="ATP SYNTHASE GAMMA CHAIN"/>
    <property type="match status" value="1"/>
</dbReference>
<dbReference type="PANTHER" id="PTHR11693:SF22">
    <property type="entry name" value="ATP SYNTHASE SUBUNIT GAMMA, MITOCHONDRIAL"/>
    <property type="match status" value="1"/>
</dbReference>
<dbReference type="Pfam" id="PF00231">
    <property type="entry name" value="ATP-synt"/>
    <property type="match status" value="1"/>
</dbReference>
<dbReference type="PRINTS" id="PR00126">
    <property type="entry name" value="ATPASEGAMMA"/>
</dbReference>
<dbReference type="SUPFAM" id="SSF52943">
    <property type="entry name" value="ATP synthase (F1-ATPase), gamma subunit"/>
    <property type="match status" value="1"/>
</dbReference>
<dbReference type="PROSITE" id="PS00153">
    <property type="entry name" value="ATPASE_GAMMA"/>
    <property type="match status" value="1"/>
</dbReference>
<name>ATPG_AERHH</name>
<accession>A0KQX9</accession>
<protein>
    <recommendedName>
        <fullName evidence="1">ATP synthase gamma chain</fullName>
    </recommendedName>
    <alternativeName>
        <fullName evidence="1">ATP synthase F1 sector gamma subunit</fullName>
    </alternativeName>
    <alternativeName>
        <fullName evidence="1">F-ATPase gamma subunit</fullName>
    </alternativeName>
</protein>